<comment type="function">
    <text evidence="2">Plays an essential role in viral RNA transcription and replication by forming the heterotrimeric polymerase complex together with PB1 and PB2 subunits. The complex transcribes viral mRNAs by using a unique mechanism called cap-snatching. It consists in the hijacking and cleavage of host capped pre-mRNAs. These short capped RNAs are then used as primers for viral mRNAs. The PB2 subunit is responsible for the binding of the 5' cap of cellular pre-mRNAs which are subsequently cleaved after 10-13 nucleotides by the PA subunit that carries the endonuclease activity.</text>
</comment>
<comment type="cofactor">
    <cofactor evidence="2">
        <name>Mn(2+)</name>
        <dbReference type="ChEBI" id="CHEBI:29035"/>
    </cofactor>
    <text evidence="2">Binds 2 manganese ions per subunit.</text>
</comment>
<comment type="subunit">
    <text evidence="1 2">Influenza RNA polymerase is composed of three subunits: PB1, PB2 and PA. Interacts (via C-terminus) with PB1 (via N-terminus).</text>
</comment>
<comment type="subcellular location">
    <subcellularLocation>
        <location evidence="2">Host cytoplasm</location>
    </subcellularLocation>
    <subcellularLocation>
        <location evidence="2">Host nucleus</location>
    </subcellularLocation>
    <text evidence="1 2">PB1 and PA are transported in the host nucleus as a complex.</text>
</comment>
<comment type="alternative products">
    <event type="ribosomal frameshifting"/>
    <isoform>
        <id>P67922-1</id>
        <name>PA</name>
        <sequence type="displayed"/>
    </isoform>
    <isoform>
        <id>P0DJS6-1</id>
        <name>PA-X</name>
        <sequence type="external"/>
    </isoform>
</comment>
<comment type="PTM">
    <text evidence="1 2">Phosphorylated on serines and threonines by host kinases, including human casein kinase II.</text>
</comment>
<comment type="similarity">
    <text evidence="2">Belongs to the influenza viruses PA family.</text>
</comment>
<organism>
    <name type="scientific">Influenza A virus (strain A/Leningrad/134/47/1957 H2N2)</name>
    <dbReference type="NCBI Taxonomy" id="380983"/>
    <lineage>
        <taxon>Viruses</taxon>
        <taxon>Riboviria</taxon>
        <taxon>Orthornavirae</taxon>
        <taxon>Negarnaviricota</taxon>
        <taxon>Polyploviricotina</taxon>
        <taxon>Insthoviricetes</taxon>
        <taxon>Articulavirales</taxon>
        <taxon>Orthomyxoviridae</taxon>
        <taxon>Alphainfluenzavirus</taxon>
        <taxon>Alphainfluenzavirus influenzae</taxon>
        <taxon>Influenza A virus</taxon>
    </lineage>
</organism>
<reference key="1">
    <citation type="journal article" date="1992" name="Virology">
        <title>Sequence changes in the live attenuated, cold-adapted variants of influenza A/Leningrad/134/57 (H2N2) virus.</title>
        <authorList>
            <person name="Klimov A.I."/>
            <person name="Cox N.J."/>
            <person name="Yotov W.V."/>
            <person name="Rocha E."/>
            <person name="Alexandrova G.I."/>
            <person name="Kendal A.P."/>
        </authorList>
    </citation>
    <scope>NUCLEOTIDE SEQUENCE</scope>
</reference>
<sequence length="716" mass="82854">MEEFVRQCFNPMIVELAEKAMKEYGEDRKIETNKFAAICTHLEVCFMYSDFHFINEQGESIIVELDDPNALLKHRFEIIEGRDRTMAWTVVNSICNTTGAEKPKFLPDLYDYKENRFIEIGVTRREVHIYYLEKANKIKSEKTHIHIFSFTGEEMATKADYTLDEESRARIKTRLFTIRQEMASRGLWDSFRQSERGEETIEERFEITGTMRRLADQSLPPNFSCLENFRAYVDGFEPNGYIEGKLSQMSKEVNAKIEPFLKTTPRPIKLPDGPPCSQRSKFLLMDALKLSIEDPSHEGEGIPLYDAIKCMRTFFGWKEPYVVKPHDKGINPNYLLSWKQLLAELQDIENEEKIPRTKNMKKTSQLKWALGENMAPEKVDFDDCRDISDLKQYDSDEPELRSLSSWIQNEFNKACELTDSIWIELDEIGEDVAPIEHIASMRRNYFTAEVSQCRATEYIMKGVYINTALLNASCAAMDDFQLIPMISKCRTKEGRRKTNLYGFIIKGRSHLRNDTDVVNFVSMEFSLTDPRLEPHKWEKYCVLEIGDMLLRSAIGQVSRPMFLYVRTNGTSKIKMKWGMEMRRCLLQSLQQIESMIEAESSVKEKDMTKEFFENKSETWPIGESPKGVEEGSIGKVCRTLLAKSVFNSLYASPQLEGFSAESRKLLLVVQALRDNLEPGTFDLGGLYEAIEECLINDPWVLLNASWFNSFLTHALR</sequence>
<evidence type="ECO:0000250" key="1">
    <source>
        <dbReference type="UniProtKB" id="P03433"/>
    </source>
</evidence>
<evidence type="ECO:0000255" key="2">
    <source>
        <dbReference type="HAMAP-Rule" id="MF_04063"/>
    </source>
</evidence>
<name>PA_I57A3</name>
<feature type="chain" id="PRO_0000078792" description="Polymerase acidic protein">
    <location>
        <begin position="1"/>
        <end position="716"/>
    </location>
</feature>
<feature type="short sequence motif" description="Nuclear localization signal 1 (NLS1)" evidence="1 2">
    <location>
        <begin position="124"/>
        <end position="139"/>
    </location>
</feature>
<feature type="short sequence motif" description="Nuclear localization signal 2 (NLS2)" evidence="1 2">
    <location>
        <begin position="184"/>
        <end position="247"/>
    </location>
</feature>
<feature type="binding site" evidence="2">
    <location>
        <position position="41"/>
    </location>
    <ligand>
        <name>Mn(2+)</name>
        <dbReference type="ChEBI" id="CHEBI:29035"/>
        <label>1</label>
    </ligand>
</feature>
<feature type="binding site" evidence="2">
    <location>
        <position position="80"/>
    </location>
    <ligand>
        <name>Mn(2+)</name>
        <dbReference type="ChEBI" id="CHEBI:29035"/>
        <label>2</label>
    </ligand>
</feature>
<feature type="binding site" evidence="2">
    <location>
        <position position="108"/>
    </location>
    <ligand>
        <name>Mn(2+)</name>
        <dbReference type="ChEBI" id="CHEBI:29035"/>
        <label>1</label>
    </ligand>
</feature>
<feature type="binding site" evidence="2">
    <location>
        <position position="108"/>
    </location>
    <ligand>
        <name>Mn(2+)</name>
        <dbReference type="ChEBI" id="CHEBI:29035"/>
        <label>2</label>
    </ligand>
</feature>
<feature type="binding site" evidence="2">
    <location>
        <position position="119"/>
    </location>
    <ligand>
        <name>Mn(2+)</name>
        <dbReference type="ChEBI" id="CHEBI:29035"/>
        <label>1</label>
    </ligand>
</feature>
<feature type="binding site" evidence="2">
    <location>
        <position position="120"/>
    </location>
    <ligand>
        <name>Mn(2+)</name>
        <dbReference type="ChEBI" id="CHEBI:29035"/>
        <label>1</label>
    </ligand>
</feature>
<dbReference type="EC" id="3.1.-.-" evidence="2"/>
<dbReference type="EMBL" id="M81585">
    <property type="protein sequence ID" value="AAA19209.1"/>
    <property type="molecule type" value="Unassigned_RNA"/>
</dbReference>
<dbReference type="SMR" id="P67922"/>
<dbReference type="MEROPS" id="S62.001"/>
<dbReference type="GO" id="GO:0030430">
    <property type="term" value="C:host cell cytoplasm"/>
    <property type="evidence" value="ECO:0007669"/>
    <property type="project" value="UniProtKB-SubCell"/>
</dbReference>
<dbReference type="GO" id="GO:0042025">
    <property type="term" value="C:host cell nucleus"/>
    <property type="evidence" value="ECO:0007669"/>
    <property type="project" value="UniProtKB-SubCell"/>
</dbReference>
<dbReference type="GO" id="GO:0004519">
    <property type="term" value="F:endonuclease activity"/>
    <property type="evidence" value="ECO:0007669"/>
    <property type="project" value="UniProtKB-KW"/>
</dbReference>
<dbReference type="GO" id="GO:0046872">
    <property type="term" value="F:metal ion binding"/>
    <property type="evidence" value="ECO:0007669"/>
    <property type="project" value="UniProtKB-KW"/>
</dbReference>
<dbReference type="GO" id="GO:0003723">
    <property type="term" value="F:RNA binding"/>
    <property type="evidence" value="ECO:0007669"/>
    <property type="project" value="UniProtKB-UniRule"/>
</dbReference>
<dbReference type="GO" id="GO:0075526">
    <property type="term" value="P:cap snatching"/>
    <property type="evidence" value="ECO:0007669"/>
    <property type="project" value="UniProtKB-UniRule"/>
</dbReference>
<dbReference type="GO" id="GO:0006351">
    <property type="term" value="P:DNA-templated transcription"/>
    <property type="evidence" value="ECO:0007669"/>
    <property type="project" value="UniProtKB-UniRule"/>
</dbReference>
<dbReference type="GO" id="GO:0039657">
    <property type="term" value="P:symbiont-mediated suppression of host gene expression"/>
    <property type="evidence" value="ECO:0007669"/>
    <property type="project" value="UniProtKB-KW"/>
</dbReference>
<dbReference type="GO" id="GO:0039523">
    <property type="term" value="P:symbiont-mediated suppression of host mRNA transcription via inhibition of RNA polymerase II activity"/>
    <property type="evidence" value="ECO:0007669"/>
    <property type="project" value="UniProtKB-UniRule"/>
</dbReference>
<dbReference type="GO" id="GO:0039694">
    <property type="term" value="P:viral RNA genome replication"/>
    <property type="evidence" value="ECO:0007669"/>
    <property type="project" value="InterPro"/>
</dbReference>
<dbReference type="GO" id="GO:0075523">
    <property type="term" value="P:viral translational frameshifting"/>
    <property type="evidence" value="ECO:0007669"/>
    <property type="project" value="UniProtKB-KW"/>
</dbReference>
<dbReference type="FunFam" id="3.40.91.90:FF:000001">
    <property type="entry name" value="Polymerase acidic protein"/>
    <property type="match status" value="1"/>
</dbReference>
<dbReference type="Gene3D" id="3.40.91.90">
    <property type="entry name" value="Influenza RNA-dependent RNA polymerase subunit PA, endonuclease domain"/>
    <property type="match status" value="1"/>
</dbReference>
<dbReference type="HAMAP" id="MF_04063">
    <property type="entry name" value="INFV_PA"/>
    <property type="match status" value="1"/>
</dbReference>
<dbReference type="InterPro" id="IPR037534">
    <property type="entry name" value="INFV_PA"/>
</dbReference>
<dbReference type="InterPro" id="IPR001009">
    <property type="entry name" value="PA/PA-X"/>
</dbReference>
<dbReference type="InterPro" id="IPR038372">
    <property type="entry name" value="PA/PA-X_sf"/>
</dbReference>
<dbReference type="Pfam" id="PF00603">
    <property type="entry name" value="Flu_PA"/>
    <property type="match status" value="1"/>
</dbReference>
<protein>
    <recommendedName>
        <fullName evidence="2">Polymerase acidic protein</fullName>
        <ecNumber evidence="2">3.1.-.-</ecNumber>
    </recommendedName>
    <alternativeName>
        <fullName evidence="2">RNA-directed RNA polymerase subunit P2</fullName>
    </alternativeName>
</protein>
<gene>
    <name evidence="2" type="primary">PA</name>
</gene>
<proteinExistence type="inferred from homology"/>
<accession>P67922</accession>
<accession>P26123</accession>
<organismHost>
    <name type="scientific">Aves</name>
    <dbReference type="NCBI Taxonomy" id="8782"/>
</organismHost>
<organismHost>
    <name type="scientific">Homo sapiens</name>
    <name type="common">Human</name>
    <dbReference type="NCBI Taxonomy" id="9606"/>
</organismHost>
<keyword id="KW-1157">Cap snatching</keyword>
<keyword id="KW-0255">Endonuclease</keyword>
<keyword id="KW-1262">Eukaryotic host gene expression shutoff by virus</keyword>
<keyword id="KW-1191">Eukaryotic host transcription shutoff by virus</keyword>
<keyword id="KW-1035">Host cytoplasm</keyword>
<keyword id="KW-1190">Host gene expression shutoff by virus</keyword>
<keyword id="KW-1048">Host nucleus</keyword>
<keyword id="KW-0945">Host-virus interaction</keyword>
<keyword id="KW-0378">Hydrolase</keyword>
<keyword id="KW-1104">Inhibition of host RNA polymerase II by virus</keyword>
<keyword id="KW-0464">Manganese</keyword>
<keyword id="KW-0479">Metal-binding</keyword>
<keyword id="KW-0540">Nuclease</keyword>
<keyword id="KW-0597">Phosphoprotein</keyword>
<keyword id="KW-0688">Ribosomal frameshifting</keyword>